<organism>
    <name type="scientific">Mus musculus</name>
    <name type="common">Mouse</name>
    <dbReference type="NCBI Taxonomy" id="10090"/>
    <lineage>
        <taxon>Eukaryota</taxon>
        <taxon>Metazoa</taxon>
        <taxon>Chordata</taxon>
        <taxon>Craniata</taxon>
        <taxon>Vertebrata</taxon>
        <taxon>Euteleostomi</taxon>
        <taxon>Mammalia</taxon>
        <taxon>Eutheria</taxon>
        <taxon>Euarchontoglires</taxon>
        <taxon>Glires</taxon>
        <taxon>Rodentia</taxon>
        <taxon>Myomorpha</taxon>
        <taxon>Muroidea</taxon>
        <taxon>Muridae</taxon>
        <taxon>Murinae</taxon>
        <taxon>Mus</taxon>
        <taxon>Mus</taxon>
    </lineage>
</organism>
<accession>Q3UJ81</accession>
<accession>A7E1Z4</accession>
<accession>Q8VEG8</accession>
<accession>Q9D3Q4</accession>
<protein>
    <recommendedName>
        <fullName>Nuclear envelope phosphatase-regulatory subunit 1</fullName>
        <shortName>NEP1-R1</shortName>
    </recommendedName>
    <alternativeName>
        <fullName>Transmembrane protein 188</fullName>
    </alternativeName>
</protein>
<dbReference type="EMBL" id="AK017198">
    <property type="protein sequence ID" value="BAB30631.1"/>
    <property type="molecule type" value="mRNA"/>
</dbReference>
<dbReference type="EMBL" id="AK146578">
    <property type="protein sequence ID" value="BAE27274.1"/>
    <property type="molecule type" value="mRNA"/>
</dbReference>
<dbReference type="EMBL" id="BC018498">
    <property type="status" value="NOT_ANNOTATED_CDS"/>
    <property type="molecule type" value="mRNA"/>
</dbReference>
<dbReference type="EMBL" id="BC148291">
    <property type="protein sequence ID" value="AAI48292.2"/>
    <property type="molecule type" value="mRNA"/>
</dbReference>
<dbReference type="CCDS" id="CCDS52628.1">
    <molecule id="Q3UJ81-1"/>
</dbReference>
<dbReference type="RefSeq" id="NP_083350.2">
    <molecule id="Q3UJ81-1"/>
    <property type="nucleotide sequence ID" value="NM_029074.3"/>
</dbReference>
<dbReference type="SMR" id="Q3UJ81"/>
<dbReference type="BioGRID" id="238195">
    <property type="interactions" value="1"/>
</dbReference>
<dbReference type="FunCoup" id="Q3UJ81">
    <property type="interactions" value="2729"/>
</dbReference>
<dbReference type="STRING" id="10090.ENSMUSP00000092839"/>
<dbReference type="iPTMnet" id="Q3UJ81"/>
<dbReference type="PhosphoSitePlus" id="Q3UJ81"/>
<dbReference type="PaxDb" id="10090-ENSMUSP00000092839"/>
<dbReference type="PeptideAtlas" id="Q3UJ81"/>
<dbReference type="ProteomicsDB" id="287476">
    <molecule id="Q3UJ81-1"/>
</dbReference>
<dbReference type="ProteomicsDB" id="287477">
    <molecule id="Q3UJ81-2"/>
</dbReference>
<dbReference type="ProteomicsDB" id="287478">
    <molecule id="Q3UJ81-3"/>
</dbReference>
<dbReference type="Pumba" id="Q3UJ81"/>
<dbReference type="Antibodypedia" id="49431">
    <property type="antibodies" value="14 antibodies from 8 providers"/>
</dbReference>
<dbReference type="Ensembl" id="ENSMUST00000095214.10">
    <molecule id="Q3UJ81-1"/>
    <property type="protein sequence ID" value="ENSMUSP00000092839.4"/>
    <property type="gene ID" value="ENSMUSG00000036810.17"/>
</dbReference>
<dbReference type="Ensembl" id="ENSMUST00000121097.8">
    <molecule id="Q3UJ81-2"/>
    <property type="protein sequence ID" value="ENSMUSP00000113435.2"/>
    <property type="gene ID" value="ENSMUSG00000036810.17"/>
</dbReference>
<dbReference type="Ensembl" id="ENSMUST00000127490.8">
    <molecule id="Q3UJ81-3"/>
    <property type="protein sequence ID" value="ENSMUSP00000120121.2"/>
    <property type="gene ID" value="ENSMUSG00000036810.17"/>
</dbReference>
<dbReference type="GeneID" id="382030"/>
<dbReference type="KEGG" id="mmu:382030"/>
<dbReference type="UCSC" id="uc009mqx.2">
    <molecule id="Q3UJ81-2"/>
    <property type="organism name" value="mouse"/>
</dbReference>
<dbReference type="UCSC" id="uc009mqz.2">
    <molecule id="Q3UJ81-1"/>
    <property type="organism name" value="mouse"/>
</dbReference>
<dbReference type="AGR" id="MGI:1921981"/>
<dbReference type="CTD" id="255919"/>
<dbReference type="MGI" id="MGI:1921981">
    <property type="gene designation" value="Cnep1r1"/>
</dbReference>
<dbReference type="VEuPathDB" id="HostDB:ENSMUSG00000036810"/>
<dbReference type="eggNOG" id="KOG4606">
    <property type="taxonomic scope" value="Eukaryota"/>
</dbReference>
<dbReference type="GeneTree" id="ENSGT00390000008576"/>
<dbReference type="HOGENOM" id="CLU_138149_1_0_1"/>
<dbReference type="InParanoid" id="Q3UJ81"/>
<dbReference type="OMA" id="NHPFFAI"/>
<dbReference type="OrthoDB" id="5786980at2759"/>
<dbReference type="PhylomeDB" id="Q3UJ81"/>
<dbReference type="TreeFam" id="TF313179"/>
<dbReference type="Reactome" id="R-MMU-4419969">
    <property type="pathway name" value="Depolymerization of the Nuclear Lamina"/>
</dbReference>
<dbReference type="BioGRID-ORCS" id="382030">
    <property type="hits" value="5 hits in 80 CRISPR screens"/>
</dbReference>
<dbReference type="ChiTaRS" id="Cnep1r1">
    <property type="organism name" value="mouse"/>
</dbReference>
<dbReference type="PRO" id="PR:Q3UJ81"/>
<dbReference type="Proteomes" id="UP000000589">
    <property type="component" value="Chromosome 8"/>
</dbReference>
<dbReference type="RNAct" id="Q3UJ81">
    <property type="molecule type" value="protein"/>
</dbReference>
<dbReference type="Bgee" id="ENSMUSG00000036810">
    <property type="expression patterns" value="Expressed in humerus cartilage element and 247 other cell types or tissues"/>
</dbReference>
<dbReference type="ExpressionAtlas" id="Q3UJ81">
    <property type="expression patterns" value="baseline and differential"/>
</dbReference>
<dbReference type="GO" id="GO:0005737">
    <property type="term" value="C:cytoplasm"/>
    <property type="evidence" value="ECO:0000250"/>
    <property type="project" value="UniProtKB"/>
</dbReference>
<dbReference type="GO" id="GO:0005829">
    <property type="term" value="C:cytosol"/>
    <property type="evidence" value="ECO:0007669"/>
    <property type="project" value="Ensembl"/>
</dbReference>
<dbReference type="GO" id="GO:0071595">
    <property type="term" value="C:Nem1-Spo7 phosphatase complex"/>
    <property type="evidence" value="ECO:0000250"/>
    <property type="project" value="UniProtKB"/>
</dbReference>
<dbReference type="GO" id="GO:0031965">
    <property type="term" value="C:nuclear membrane"/>
    <property type="evidence" value="ECO:0000250"/>
    <property type="project" value="UniProtKB"/>
</dbReference>
<dbReference type="GO" id="GO:0019888">
    <property type="term" value="F:protein phosphatase regulator activity"/>
    <property type="evidence" value="ECO:0000250"/>
    <property type="project" value="UniProtKB"/>
</dbReference>
<dbReference type="GO" id="GO:0006629">
    <property type="term" value="P:lipid metabolic process"/>
    <property type="evidence" value="ECO:0007669"/>
    <property type="project" value="UniProtKB-KW"/>
</dbReference>
<dbReference type="GO" id="GO:0010867">
    <property type="term" value="P:positive regulation of triglyceride biosynthetic process"/>
    <property type="evidence" value="ECO:0000250"/>
    <property type="project" value="UniProtKB"/>
</dbReference>
<dbReference type="GO" id="GO:0034504">
    <property type="term" value="P:protein localization to nucleus"/>
    <property type="evidence" value="ECO:0000250"/>
    <property type="project" value="UniProtKB"/>
</dbReference>
<dbReference type="InterPro" id="IPR019168">
    <property type="entry name" value="NEP1-R1"/>
</dbReference>
<dbReference type="PANTHER" id="PTHR20996">
    <property type="entry name" value="NUCLEAR ENVELOPE PHOSPHATASE-REGULATORY SUBUNIT 1"/>
    <property type="match status" value="1"/>
</dbReference>
<dbReference type="PANTHER" id="PTHR20996:SF1">
    <property type="entry name" value="NUCLEAR ENVELOPE PHOSPHATASE-REGULATORY SUBUNIT 1"/>
    <property type="match status" value="1"/>
</dbReference>
<dbReference type="Pfam" id="PF09771">
    <property type="entry name" value="Tmemb_18A"/>
    <property type="match status" value="1"/>
</dbReference>
<gene>
    <name type="primary">Cnep1r1</name>
    <name type="synonym">Tmem188</name>
</gene>
<proteinExistence type="evidence at protein level"/>
<evidence type="ECO:0000250" key="1"/>
<evidence type="ECO:0000250" key="2">
    <source>
        <dbReference type="UniProtKB" id="Q8N9A8"/>
    </source>
</evidence>
<evidence type="ECO:0000255" key="3"/>
<evidence type="ECO:0000269" key="4">
    <source>
    </source>
</evidence>
<evidence type="ECO:0000303" key="5">
    <source>
    </source>
</evidence>
<evidence type="ECO:0000303" key="6">
    <source>
    </source>
</evidence>
<evidence type="ECO:0000305" key="7"/>
<keyword id="KW-0007">Acetylation</keyword>
<keyword id="KW-0025">Alternative splicing</keyword>
<keyword id="KW-0963">Cytoplasm</keyword>
<keyword id="KW-0443">Lipid metabolism</keyword>
<keyword id="KW-0472">Membrane</keyword>
<keyword id="KW-0539">Nucleus</keyword>
<keyword id="KW-1185">Reference proteome</keyword>
<keyword id="KW-0812">Transmembrane</keyword>
<keyword id="KW-1133">Transmembrane helix</keyword>
<feature type="chain" id="PRO_0000286616" description="Nuclear envelope phosphatase-regulatory subunit 1">
    <location>
        <begin position="1"/>
        <end position="125"/>
    </location>
</feature>
<feature type="transmembrane region" description="Helical" evidence="3">
    <location>
        <begin position="33"/>
        <end position="53"/>
    </location>
</feature>
<feature type="transmembrane region" description="Helical" evidence="3">
    <location>
        <begin position="65"/>
        <end position="85"/>
    </location>
</feature>
<feature type="modified residue" description="N-acetylmethionine" evidence="2">
    <location>
        <position position="1"/>
    </location>
</feature>
<feature type="splice variant" id="VSP_025129" description="In isoform 3." evidence="5">
    <original>MLLIVVSVCTATGAW</original>
    <variation>SVLLHVIMEPSVFHY</variation>
    <location>
        <begin position="33"/>
        <end position="47"/>
    </location>
</feature>
<feature type="splice variant" id="VSP_025130" description="In isoform 3." evidence="5">
    <location>
        <begin position="48"/>
        <end position="125"/>
    </location>
</feature>
<feature type="splice variant" id="VSP_025131" description="In isoform 2." evidence="6">
    <original>IIAARCRTVLAEYNMSCDDTGKLILKPRPHVQ</original>
    <variation>MYPLPRVEFCYHN</variation>
    <location>
        <begin position="94"/>
        <end position="125"/>
    </location>
</feature>
<name>NEPR1_MOUSE</name>
<sequence length="125" mass="14267">MNSLEQAEDLKAFERRLTEYIHCLQPATGRWRMLLIVVSVCTATGAWNWLIDPETQKVSFFTSLWNHPFFTISCITLIGLFFAGIHKRVVAPSIIAARCRTVLAEYNMSCDDTGKLILKPRPHVQ</sequence>
<comment type="function">
    <text evidence="1">Forms with the serine/threonine protein phosphatase CTDNEP1 an active complex which dephosphorylates and may activate LPIN1 and LPIN2. LPIN1 and LPIN2 are phosphatidate phosphatases that catalyze the conversion of phosphatidic acid to diacylglycerol and control the metabolism of fatty acids at different levels. May indirectly modulate the lipid composition of nuclear and/or endoplasmic reticulum membranes and be required for proper nuclear membrane morphology and/or dynamics. May also indirectly regulate the production of lipid droplets and triacylglycerol (By similarity).</text>
</comment>
<comment type="subunit">
    <text evidence="1">Interacts with CTDNEP1; the complex dephosphorylates LPIN1 and LPIN2.</text>
</comment>
<comment type="subcellular location">
    <subcellularLocation>
        <location evidence="1">Nucleus membrane</location>
        <topology evidence="1">Multi-pass membrane protein</topology>
    </subcellularLocation>
    <subcellularLocation>
        <location evidence="1">Cytoplasm</location>
    </subcellularLocation>
    <text evidence="1">Filamentous pattern in the cytoplasm.</text>
</comment>
<comment type="alternative products">
    <event type="alternative splicing"/>
    <isoform>
        <id>Q3UJ81-1</id>
        <name>1</name>
        <sequence type="displayed"/>
    </isoform>
    <isoform>
        <id>Q3UJ81-2</id>
        <name>2</name>
        <sequence type="described" ref="VSP_025131"/>
    </isoform>
    <isoform>
        <id>Q3UJ81-3</id>
        <name>3</name>
        <sequence type="described" ref="VSP_025129 VSP_025130"/>
    </isoform>
</comment>
<comment type="tissue specificity">
    <text evidence="4">Muscle specific with lower expression in other metabolic tissues.</text>
</comment>
<comment type="miscellaneous">
    <molecule>Isoform 3</molecule>
    <text evidence="7">May be produced at very low levels due to a premature stop codon in the mRNA, leading to nonsense-mediated mRNA decay.</text>
</comment>
<comment type="similarity">
    <text evidence="7">Belongs to the CNEP1R1 family.</text>
</comment>
<reference key="1">
    <citation type="journal article" date="2005" name="Science">
        <title>The transcriptional landscape of the mammalian genome.</title>
        <authorList>
            <person name="Carninci P."/>
            <person name="Kasukawa T."/>
            <person name="Katayama S."/>
            <person name="Gough J."/>
            <person name="Frith M.C."/>
            <person name="Maeda N."/>
            <person name="Oyama R."/>
            <person name="Ravasi T."/>
            <person name="Lenhard B."/>
            <person name="Wells C."/>
            <person name="Kodzius R."/>
            <person name="Shimokawa K."/>
            <person name="Bajic V.B."/>
            <person name="Brenner S.E."/>
            <person name="Batalov S."/>
            <person name="Forrest A.R."/>
            <person name="Zavolan M."/>
            <person name="Davis M.J."/>
            <person name="Wilming L.G."/>
            <person name="Aidinis V."/>
            <person name="Allen J.E."/>
            <person name="Ambesi-Impiombato A."/>
            <person name="Apweiler R."/>
            <person name="Aturaliya R.N."/>
            <person name="Bailey T.L."/>
            <person name="Bansal M."/>
            <person name="Baxter L."/>
            <person name="Beisel K.W."/>
            <person name="Bersano T."/>
            <person name="Bono H."/>
            <person name="Chalk A.M."/>
            <person name="Chiu K.P."/>
            <person name="Choudhary V."/>
            <person name="Christoffels A."/>
            <person name="Clutterbuck D.R."/>
            <person name="Crowe M.L."/>
            <person name="Dalla E."/>
            <person name="Dalrymple B.P."/>
            <person name="de Bono B."/>
            <person name="Della Gatta G."/>
            <person name="di Bernardo D."/>
            <person name="Down T."/>
            <person name="Engstrom P."/>
            <person name="Fagiolini M."/>
            <person name="Faulkner G."/>
            <person name="Fletcher C.F."/>
            <person name="Fukushima T."/>
            <person name="Furuno M."/>
            <person name="Futaki S."/>
            <person name="Gariboldi M."/>
            <person name="Georgii-Hemming P."/>
            <person name="Gingeras T.R."/>
            <person name="Gojobori T."/>
            <person name="Green R.E."/>
            <person name="Gustincich S."/>
            <person name="Harbers M."/>
            <person name="Hayashi Y."/>
            <person name="Hensch T.K."/>
            <person name="Hirokawa N."/>
            <person name="Hill D."/>
            <person name="Huminiecki L."/>
            <person name="Iacono M."/>
            <person name="Ikeo K."/>
            <person name="Iwama A."/>
            <person name="Ishikawa T."/>
            <person name="Jakt M."/>
            <person name="Kanapin A."/>
            <person name="Katoh M."/>
            <person name="Kawasawa Y."/>
            <person name="Kelso J."/>
            <person name="Kitamura H."/>
            <person name="Kitano H."/>
            <person name="Kollias G."/>
            <person name="Krishnan S.P."/>
            <person name="Kruger A."/>
            <person name="Kummerfeld S.K."/>
            <person name="Kurochkin I.V."/>
            <person name="Lareau L.F."/>
            <person name="Lazarevic D."/>
            <person name="Lipovich L."/>
            <person name="Liu J."/>
            <person name="Liuni S."/>
            <person name="McWilliam S."/>
            <person name="Madan Babu M."/>
            <person name="Madera M."/>
            <person name="Marchionni L."/>
            <person name="Matsuda H."/>
            <person name="Matsuzawa S."/>
            <person name="Miki H."/>
            <person name="Mignone F."/>
            <person name="Miyake S."/>
            <person name="Morris K."/>
            <person name="Mottagui-Tabar S."/>
            <person name="Mulder N."/>
            <person name="Nakano N."/>
            <person name="Nakauchi H."/>
            <person name="Ng P."/>
            <person name="Nilsson R."/>
            <person name="Nishiguchi S."/>
            <person name="Nishikawa S."/>
            <person name="Nori F."/>
            <person name="Ohara O."/>
            <person name="Okazaki Y."/>
            <person name="Orlando V."/>
            <person name="Pang K.C."/>
            <person name="Pavan W.J."/>
            <person name="Pavesi G."/>
            <person name="Pesole G."/>
            <person name="Petrovsky N."/>
            <person name="Piazza S."/>
            <person name="Reed J."/>
            <person name="Reid J.F."/>
            <person name="Ring B.Z."/>
            <person name="Ringwald M."/>
            <person name="Rost B."/>
            <person name="Ruan Y."/>
            <person name="Salzberg S.L."/>
            <person name="Sandelin A."/>
            <person name="Schneider C."/>
            <person name="Schoenbach C."/>
            <person name="Sekiguchi K."/>
            <person name="Semple C.A."/>
            <person name="Seno S."/>
            <person name="Sessa L."/>
            <person name="Sheng Y."/>
            <person name="Shibata Y."/>
            <person name="Shimada H."/>
            <person name="Shimada K."/>
            <person name="Silva D."/>
            <person name="Sinclair B."/>
            <person name="Sperling S."/>
            <person name="Stupka E."/>
            <person name="Sugiura K."/>
            <person name="Sultana R."/>
            <person name="Takenaka Y."/>
            <person name="Taki K."/>
            <person name="Tammoja K."/>
            <person name="Tan S.L."/>
            <person name="Tang S."/>
            <person name="Taylor M.S."/>
            <person name="Tegner J."/>
            <person name="Teichmann S.A."/>
            <person name="Ueda H.R."/>
            <person name="van Nimwegen E."/>
            <person name="Verardo R."/>
            <person name="Wei C.L."/>
            <person name="Yagi K."/>
            <person name="Yamanishi H."/>
            <person name="Zabarovsky E."/>
            <person name="Zhu S."/>
            <person name="Zimmer A."/>
            <person name="Hide W."/>
            <person name="Bult C."/>
            <person name="Grimmond S.M."/>
            <person name="Teasdale R.D."/>
            <person name="Liu E.T."/>
            <person name="Brusic V."/>
            <person name="Quackenbush J."/>
            <person name="Wahlestedt C."/>
            <person name="Mattick J.S."/>
            <person name="Hume D.A."/>
            <person name="Kai C."/>
            <person name="Sasaki D."/>
            <person name="Tomaru Y."/>
            <person name="Fukuda S."/>
            <person name="Kanamori-Katayama M."/>
            <person name="Suzuki M."/>
            <person name="Aoki J."/>
            <person name="Arakawa T."/>
            <person name="Iida J."/>
            <person name="Imamura K."/>
            <person name="Itoh M."/>
            <person name="Kato T."/>
            <person name="Kawaji H."/>
            <person name="Kawagashira N."/>
            <person name="Kawashima T."/>
            <person name="Kojima M."/>
            <person name="Kondo S."/>
            <person name="Konno H."/>
            <person name="Nakano K."/>
            <person name="Ninomiya N."/>
            <person name="Nishio T."/>
            <person name="Okada M."/>
            <person name="Plessy C."/>
            <person name="Shibata K."/>
            <person name="Shiraki T."/>
            <person name="Suzuki S."/>
            <person name="Tagami M."/>
            <person name="Waki K."/>
            <person name="Watahiki A."/>
            <person name="Okamura-Oho Y."/>
            <person name="Suzuki H."/>
            <person name="Kawai J."/>
            <person name="Hayashizaki Y."/>
        </authorList>
    </citation>
    <scope>NUCLEOTIDE SEQUENCE [LARGE SCALE MRNA] (ISOFORMS 1 AND 2)</scope>
    <source>
        <strain>C57BL/6J</strain>
        <tissue>Embryonic heart</tissue>
    </source>
</reference>
<reference key="2">
    <citation type="journal article" date="2004" name="Genome Res.">
        <title>The status, quality, and expansion of the NIH full-length cDNA project: the Mammalian Gene Collection (MGC).</title>
        <authorList>
            <consortium name="The MGC Project Team"/>
        </authorList>
    </citation>
    <scope>NUCLEOTIDE SEQUENCE [LARGE SCALE MRNA] (ISOFORMS 1 AND 3)</scope>
    <source>
        <strain>Czech II</strain>
        <tissue>Mammary tumor</tissue>
    </source>
</reference>
<reference key="3">
    <citation type="journal article" date="2010" name="Cell">
        <title>A tissue-specific atlas of mouse protein phosphorylation and expression.</title>
        <authorList>
            <person name="Huttlin E.L."/>
            <person name="Jedrychowski M.P."/>
            <person name="Elias J.E."/>
            <person name="Goswami T."/>
            <person name="Rad R."/>
            <person name="Beausoleil S.A."/>
            <person name="Villen J."/>
            <person name="Haas W."/>
            <person name="Sowa M.E."/>
            <person name="Gygi S.P."/>
        </authorList>
    </citation>
    <scope>IDENTIFICATION BY MASS SPECTROMETRY [LARGE SCALE ANALYSIS]</scope>
    <source>
        <tissue>Testis</tissue>
    </source>
</reference>
<reference key="4">
    <citation type="journal article" date="2012" name="J. Biol. Chem.">
        <title>Nuclear envelope phosphatase-regulatory subunit 1 (formerly TMEM188) is the metazoan SPO7 ortholog and functions in the lipin activation pathway.</title>
        <authorList>
            <person name="Han S."/>
            <person name="Bahmanyar S."/>
            <person name="Zhang P."/>
            <person name="Grishin N."/>
            <person name="Oegema K."/>
            <person name="Crooke R."/>
            <person name="Graham M."/>
            <person name="Reue K."/>
            <person name="Dixon J.E."/>
            <person name="Goodman J.M."/>
        </authorList>
    </citation>
    <scope>TISSUE SPECIFICITY</scope>
</reference>